<dbReference type="EMBL" id="AH005833">
    <property type="protein sequence ID" value="AAB97755.1"/>
    <property type="molecule type" value="Genomic_DNA"/>
</dbReference>
<dbReference type="SMR" id="O46584"/>
<dbReference type="UniPathway" id="UPA00705"/>
<dbReference type="GO" id="GO:0005743">
    <property type="term" value="C:mitochondrial inner membrane"/>
    <property type="evidence" value="ECO:0000250"/>
    <property type="project" value="UniProtKB"/>
</dbReference>
<dbReference type="GO" id="GO:0045277">
    <property type="term" value="C:respiratory chain complex IV"/>
    <property type="evidence" value="ECO:0007669"/>
    <property type="project" value="InterPro"/>
</dbReference>
<dbReference type="GO" id="GO:0006123">
    <property type="term" value="P:mitochondrial electron transport, cytochrome c to oxygen"/>
    <property type="evidence" value="ECO:0007669"/>
    <property type="project" value="InterPro"/>
</dbReference>
<dbReference type="CDD" id="cd00922">
    <property type="entry name" value="Cyt_c_Oxidase_IV"/>
    <property type="match status" value="1"/>
</dbReference>
<dbReference type="FunFam" id="1.10.442.10:FF:000001">
    <property type="entry name" value="Cytochrome c oxidase subunit 4 isoform 1"/>
    <property type="match status" value="1"/>
</dbReference>
<dbReference type="Gene3D" id="1.10.442.10">
    <property type="entry name" value="Cytochrome c oxidase subunit IV"/>
    <property type="match status" value="1"/>
</dbReference>
<dbReference type="InterPro" id="IPR013288">
    <property type="entry name" value="Cyt_c_oxidase_su4"/>
</dbReference>
<dbReference type="InterPro" id="IPR004203">
    <property type="entry name" value="Cyt_c_oxidase_su4_fam"/>
</dbReference>
<dbReference type="InterPro" id="IPR036639">
    <property type="entry name" value="Cyt_c_oxidase_su4_sf"/>
</dbReference>
<dbReference type="PANTHER" id="PTHR10707:SF12">
    <property type="entry name" value="CYTOCHROME C OXIDASE SUBUNIT 4 ISOFORM 1, MITOCHONDRIAL"/>
    <property type="match status" value="1"/>
</dbReference>
<dbReference type="PANTHER" id="PTHR10707">
    <property type="entry name" value="CYTOCHROME C OXIDASE SUBUNIT IV"/>
    <property type="match status" value="1"/>
</dbReference>
<dbReference type="Pfam" id="PF02936">
    <property type="entry name" value="COX4"/>
    <property type="match status" value="1"/>
</dbReference>
<dbReference type="PRINTS" id="PR01873">
    <property type="entry name" value="CYTCOXIDASE4"/>
</dbReference>
<dbReference type="SUPFAM" id="SSF81406">
    <property type="entry name" value="Mitochondrial cytochrome c oxidase subunit IV"/>
    <property type="match status" value="1"/>
</dbReference>
<proteinExistence type="inferred from homology"/>
<gene>
    <name type="primary">COX4I1</name>
    <name type="synonym">COX4</name>
</gene>
<organism>
    <name type="scientific">Aotus azarae</name>
    <name type="common">Azara's night monkey</name>
    <name type="synonym">Simia azarae</name>
    <dbReference type="NCBI Taxonomy" id="30591"/>
    <lineage>
        <taxon>Eukaryota</taxon>
        <taxon>Metazoa</taxon>
        <taxon>Chordata</taxon>
        <taxon>Craniata</taxon>
        <taxon>Vertebrata</taxon>
        <taxon>Euteleostomi</taxon>
        <taxon>Mammalia</taxon>
        <taxon>Eutheria</taxon>
        <taxon>Euarchontoglires</taxon>
        <taxon>Primates</taxon>
        <taxon>Haplorrhini</taxon>
        <taxon>Platyrrhini</taxon>
        <taxon>Aotidae</taxon>
        <taxon>Aotus</taxon>
    </lineage>
</organism>
<feature type="chain" id="PRO_0000194072" description="Cytochrome c oxidase subunit 4 isoform 1, mitochondrial">
    <location>
        <begin position="1" status="less than"/>
        <end position="144"/>
    </location>
</feature>
<feature type="topological domain" description="Mitochondrial matrix" evidence="1">
    <location>
        <begin position="1" status="less than"/>
        <end position="73"/>
    </location>
</feature>
<feature type="transmembrane region" description="Helical" evidence="1">
    <location>
        <begin position="74"/>
        <end position="99"/>
    </location>
</feature>
<feature type="topological domain" description="Mitochondrial intermembrane" evidence="1">
    <location>
        <begin position="100"/>
        <end position="144"/>
    </location>
</feature>
<feature type="modified residue" description="N6-acetyllysine; alternate" evidence="5">
    <location>
        <position position="4"/>
    </location>
</feature>
<feature type="modified residue" description="N6-succinyllysine; alternate" evidence="5">
    <location>
        <position position="4"/>
    </location>
</feature>
<feature type="modified residue" description="Phosphoserine" evidence="3">
    <location>
        <position position="31"/>
    </location>
</feature>
<feature type="modified residue" description="Phosphoserine" evidence="3">
    <location>
        <position position="33"/>
    </location>
</feature>
<feature type="modified residue" description="N6-acetyllysine; alternate" evidence="4">
    <location>
        <position position="35"/>
    </location>
</feature>
<feature type="modified residue" description="N6-succinyllysine; alternate" evidence="5">
    <location>
        <position position="35"/>
    </location>
</feature>
<feature type="modified residue" description="N6-acetyllysine" evidence="5">
    <location>
        <position position="42"/>
    </location>
</feature>
<feature type="non-terminal residue">
    <location>
        <position position="1"/>
    </location>
</feature>
<reference key="1">
    <citation type="journal article" date="1997" name="J. Mol. Evol.">
        <title>Molecular evolution of cytochrome c oxidase subunit IV: evidence for positive selection in simian primates.</title>
        <authorList>
            <person name="Wu W."/>
            <person name="Goodman M."/>
            <person name="Lomax M.I."/>
            <person name="Grossman L.I."/>
        </authorList>
    </citation>
    <scope>NUCLEOTIDE SEQUENCE [GENOMIC DNA]</scope>
</reference>
<keyword id="KW-0007">Acetylation</keyword>
<keyword id="KW-0472">Membrane</keyword>
<keyword id="KW-0496">Mitochondrion</keyword>
<keyword id="KW-0999">Mitochondrion inner membrane</keyword>
<keyword id="KW-0597">Phosphoprotein</keyword>
<keyword id="KW-0812">Transmembrane</keyword>
<keyword id="KW-1133">Transmembrane helix</keyword>
<name>COX41_AOTAZ</name>
<comment type="function">
    <text evidence="2">Component of the cytochrome c oxidase, the last enzyme in the mitochondrial electron transport chain which drives oxidative phosphorylation. The respiratory chain contains 3 multisubunit complexes succinate dehydrogenase (complex II, CII), ubiquinol-cytochrome c oxidoreductase (cytochrome b-c1 complex, complex III, CIII) and cytochrome c oxidase (complex IV, CIV), that cooperate to transfer electrons derived from NADH and succinate to molecular oxygen, creating an electrochemical gradient over the inner membrane that drives transmembrane transport and the ATP synthase. Cytochrome c oxidase is the component of the respiratory chain that catalyzes the reduction of oxygen to water. Electrons originating from reduced cytochrome c in the intermembrane space (IMS) are transferred via the dinuclear copper A center (CU(A)) of subunit 2 and heme A of subunit 1 to the active site in subunit 1, a binuclear center (BNC) formed by heme A3 and copper B (CU(B)). The BNC reduces molecular oxygen to 2 water molecules using 4 electrons from cytochrome c in the IMS and 4 protons from the mitochondrial matrix.</text>
</comment>
<comment type="pathway">
    <text evidence="2">Energy metabolism; oxidative phosphorylation.</text>
</comment>
<comment type="subunit">
    <text evidence="1 3 4 5">Component of the cytochrome c oxidase (complex IV, CIV), a multisubunit enzyme composed of 14 subunits. The complex is composed of a catalytic core of 3 subunits MT-CO1, MT-CO2 and MT-CO3, encoded in the mitochondrial DNA, and 11 supernumerary subunits COX4I, COX5A, COX5B, COX6A, COX6B, COX6C, COX7A, COX7B, COX7C, COX8 and NDUFA4, which are encoded in the nuclear genome. The complex exists as a monomer or a dimer and forms supercomplexes (SCs) in the inner mitochondrial membrane with NADH-ubiquinone oxidoreductase (complex I, CI) and ubiquinol-cytochrome c oxidoreductase (cytochrome b-c1 complex, complex III, CIII), resulting in different assemblies (supercomplex SCI(1)III(2)IV(1) and megacomplex MCI(2)III(2)IV(2)) (By similarity). Interacts with PHB2; the interaction decreases in absence of SPHK2 (By similarity). Interacts with AFG1L (By similarity). Interacts with ABCB7; this interaction allows the regulation of cellular iron homeostasis and cellular reactive oxygen species (ROS) levels in cardiomyocytes (By similarity). Interacts with FLVCR2; this interaction occurs in the absence of heme and is disrupted upon heme binding. Interacts with IRGC (By similarity).</text>
</comment>
<comment type="subcellular location">
    <subcellularLocation>
        <location evidence="1">Mitochondrion inner membrane</location>
        <topology evidence="1">Single-pass membrane protein</topology>
    </subcellularLocation>
</comment>
<comment type="similarity">
    <text evidence="6">Belongs to the cytochrome c oxidase IV family.</text>
</comment>
<accession>O46584</accession>
<evidence type="ECO:0000250" key="1">
    <source>
        <dbReference type="UniProtKB" id="P00423"/>
    </source>
</evidence>
<evidence type="ECO:0000250" key="2">
    <source>
        <dbReference type="UniProtKB" id="P00424"/>
    </source>
</evidence>
<evidence type="ECO:0000250" key="3">
    <source>
        <dbReference type="UniProtKB" id="P10888"/>
    </source>
</evidence>
<evidence type="ECO:0000250" key="4">
    <source>
        <dbReference type="UniProtKB" id="P13073"/>
    </source>
</evidence>
<evidence type="ECO:0000250" key="5">
    <source>
        <dbReference type="UniProtKB" id="P19783"/>
    </source>
</evidence>
<evidence type="ECO:0000305" key="6"/>
<sequence length="144" mass="16824">SVVKSEDYALPSYVDRRDYPLPDVAHVRHLSASQKALKEKEKASWSSLSMDEKVELYRIQFKESFAEMNRGSNEWKTVVGAAMFFIGFTAILIILEKRYVYGPLPHTFDKEWVAMQTKRMLDLKVNPVDGLASKWDYDKKEWKK</sequence>
<protein>
    <recommendedName>
        <fullName>Cytochrome c oxidase subunit 4 isoform 1, mitochondrial</fullName>
    </recommendedName>
    <alternativeName>
        <fullName>Cytochrome c oxidase polypeptide IV</fullName>
    </alternativeName>
    <alternativeName>
        <fullName>Cytochrome c oxidase subunit IV isoform 1</fullName>
        <shortName>COX IV-1</shortName>
    </alternativeName>
</protein>